<sequence>MNCSESQRLRTLLSRLLLELHHRGNASGLGAGPRPSMGMGVVPDPFVGREVTSAKGDDAYLYILLIMIFYACLAGGLILAYTRSRKLVEAKDEPSQACAEHEWAPGGALTADAEAAAGSQAEGRRQLASEGLPALAQGAERV</sequence>
<gene>
    <name type="primary">KCNE5</name>
    <name type="synonym">AMMECR2</name>
    <name evidence="10" type="synonym">KCNE1L</name>
</gene>
<name>KCNE5_HUMAN</name>
<keyword id="KW-0023">Alport syndrome</keyword>
<keyword id="KW-0209">Deafness</keyword>
<keyword id="KW-0250">Elliptocytosis</keyword>
<keyword id="KW-0325">Glycoprotein</keyword>
<keyword id="KW-0360">Hereditary hemolytic anemia</keyword>
<keyword id="KW-0991">Intellectual disability</keyword>
<keyword id="KW-0472">Membrane</keyword>
<keyword id="KW-1185">Reference proteome</keyword>
<keyword id="KW-0812">Transmembrane</keyword>
<keyword id="KW-1133">Transmembrane helix</keyword>
<comment type="function">
    <text evidence="5">Potassium channel ancillary subunit that is essential for generation of some native K(+) currents by virtue of formation of heteromeric ion channel complex with voltage-gated potassium (Kv) channel pore-forming alpha subunits. Functions as an inhibitory beta-subunit of the repolarizing cardiac potassium ion channel KCNQ1.</text>
</comment>
<comment type="subunit">
    <text evidence="5 8">Interacts with KCNQ1; impairs KCNQ1 localization in lipid rafts and only conducts current upon strong and continued depolarization.</text>
</comment>
<comment type="interaction">
    <interactant intactId="EBI-11981259">
        <id>Q9UJ90</id>
    </interactant>
    <interactant intactId="EBI-2515857">
        <id>O43681</id>
        <label>GET3</label>
    </interactant>
    <organismsDiffer>false</organismsDiffer>
    <experiments>3</experiments>
</comment>
<comment type="interaction">
    <interactant intactId="EBI-11981259">
        <id>Q9UJ90</id>
    </interactant>
    <interactant intactId="EBI-1045534">
        <id>O00264</id>
        <label>PGRMC1</label>
    </interactant>
    <organismsDiffer>false</organismsDiffer>
    <experiments>3</experiments>
</comment>
<comment type="interaction">
    <interactant intactId="EBI-11981259">
        <id>Q9UJ90</id>
    </interactant>
    <interactant intactId="EBI-347996">
        <id>O43765</id>
        <label>SGTA</label>
    </interactant>
    <organismsDiffer>false</organismsDiffer>
    <experiments>3</experiments>
</comment>
<comment type="interaction">
    <interactant intactId="EBI-11981259">
        <id>Q9UJ90</id>
    </interactant>
    <interactant intactId="EBI-744081">
        <id>Q96EQ0</id>
        <label>SGTB</label>
    </interactant>
    <organismsDiffer>false</organismsDiffer>
    <experiments>3</experiments>
</comment>
<comment type="subcellular location">
    <subcellularLocation>
        <location evidence="8">Membrane</location>
        <topology evidence="11">Single-pass type I membrane protein</topology>
    </subcellularLocation>
</comment>
<comment type="tissue specificity">
    <text evidence="3">Highly expressed in heart, skeletal muscle, brain, spinal cord and placenta.</text>
</comment>
<comment type="disease" evidence="4">
    <disease id="DI-01183">
        <name>AMME complex</name>
        <acronym>ATS-MR</acronym>
        <description>An X-linked contiguous gene deletion syndrome characterized by glomerulonephritis, sensorineural hearing loss, intellectual disability, midface hypoplasia and elliptocytosis.</description>
        <dbReference type="MIM" id="300194"/>
    </disease>
    <text>The gene represented in this entry may be involved in disease pathogenesis.</text>
</comment>
<comment type="similarity">
    <text evidence="11">Belongs to the potassium channel KCNE family.</text>
</comment>
<protein>
    <recommendedName>
        <fullName>Potassium voltage-gated channel subfamily E regulatory beta subunit 5</fullName>
    </recommendedName>
    <alternativeName>
        <fullName>AMME syndrome candidate gene 2 protein</fullName>
    </alternativeName>
    <alternativeName>
        <fullName>Potassium channel subunit beta MiRP4</fullName>
    </alternativeName>
    <alternativeName>
        <fullName evidence="10">Potassium voltage-gated channel subfamily E member 1-like protein</fullName>
    </alternativeName>
</protein>
<reference key="1">
    <citation type="journal article" date="1999" name="Genomics">
        <title>KCNE1-like gene is deleted in AMME contiguous gene syndrome: Identification and characterization of the human and mouse homologs.</title>
        <authorList>
            <person name="Piccini M."/>
            <person name="Vitelli F."/>
            <person name="Seri M."/>
            <person name="Galietta L.J.V."/>
            <person name="Moran O."/>
            <person name="Bulfone A."/>
            <person name="Banfi S."/>
            <person name="Pober B."/>
            <person name="Renieri A."/>
        </authorList>
    </citation>
    <scope>NUCLEOTIDE SEQUENCE [MRNA]</scope>
    <scope>TISSUE SPECIFICITY</scope>
    <source>
        <tissue>Neuron</tissue>
        <tissue>Placenta</tissue>
    </source>
</reference>
<reference key="2">
    <citation type="submission" date="2006-06" db="EMBL/GenBank/DDBJ databases">
        <authorList>
            <consortium name="NHLBI resequencing and genotyping service (RS&amp;G)"/>
        </authorList>
    </citation>
    <scope>NUCLEOTIDE SEQUENCE [GENOMIC DNA]</scope>
</reference>
<reference key="3">
    <citation type="submission" date="2007-04" db="EMBL/GenBank/DDBJ databases">
        <authorList>
            <person name="Thomas D."/>
            <person name="Sullivan A.N."/>
            <person name="Goldstein S.A."/>
        </authorList>
    </citation>
    <scope>NUCLEOTIDE SEQUENCE [MRNA]</scope>
    <source>
        <tissue>Heart</tissue>
    </source>
</reference>
<reference key="4">
    <citation type="submission" date="2005-09" db="EMBL/GenBank/DDBJ databases">
        <authorList>
            <person name="Mural R.J."/>
            <person name="Istrail S."/>
            <person name="Sutton G.G."/>
            <person name="Florea L."/>
            <person name="Halpern A.L."/>
            <person name="Mobarry C.M."/>
            <person name="Lippert R."/>
            <person name="Walenz B."/>
            <person name="Shatkay H."/>
            <person name="Dew I."/>
            <person name="Miller J.R."/>
            <person name="Flanigan M.J."/>
            <person name="Edwards N.J."/>
            <person name="Bolanos R."/>
            <person name="Fasulo D."/>
            <person name="Halldorsson B.V."/>
            <person name="Hannenhalli S."/>
            <person name="Turner R."/>
            <person name="Yooseph S."/>
            <person name="Lu F."/>
            <person name="Nusskern D.R."/>
            <person name="Shue B.C."/>
            <person name="Zheng X.H."/>
            <person name="Zhong F."/>
            <person name="Delcher A.L."/>
            <person name="Huson D.H."/>
            <person name="Kravitz S.A."/>
            <person name="Mouchard L."/>
            <person name="Reinert K."/>
            <person name="Remington K.A."/>
            <person name="Clark A.G."/>
            <person name="Waterman M.S."/>
            <person name="Eichler E.E."/>
            <person name="Adams M.D."/>
            <person name="Hunkapiller M.W."/>
            <person name="Myers E.W."/>
            <person name="Venter J.C."/>
        </authorList>
    </citation>
    <scope>NUCLEOTIDE SEQUENCE [LARGE SCALE GENOMIC DNA]</scope>
</reference>
<reference key="5">
    <citation type="journal article" date="2004" name="Genome Res.">
        <title>The status, quality, and expansion of the NIH full-length cDNA project: the Mammalian Gene Collection (MGC).</title>
        <authorList>
            <consortium name="The MGC Project Team"/>
        </authorList>
    </citation>
    <scope>NUCLEOTIDE SEQUENCE [LARGE SCALE MRNA]</scope>
    <source>
        <tissue>Brain</tissue>
    </source>
</reference>
<reference key="6">
    <citation type="journal article" date="2002" name="Biophys. J.">
        <title>KCNE5 induces time- and voltage-dependent modulation of the KCNQ1 current.</title>
        <authorList>
            <person name="Angelo K."/>
            <person name="Jespersen T."/>
            <person name="Grunnet M."/>
            <person name="Nielsen M.S."/>
            <person name="Klaerke D.A."/>
            <person name="Olesen S.P."/>
        </authorList>
    </citation>
    <scope>INTERACTION WITH KCNQ1</scope>
    <scope>FUNCTION</scope>
</reference>
<reference key="7">
    <citation type="journal article" date="2010" name="J. Cell. Physiol.">
        <title>Impact of KCNE subunits on KCNQ1 (Kv7.1) channel membrane surface targeting.</title>
        <authorList>
            <person name="Roura-Ferrer M."/>
            <person name="Sole L."/>
            <person name="Oliveras A."/>
            <person name="Dahan R."/>
            <person name="Bielanska J."/>
            <person name="Villarroel A."/>
            <person name="Comes N."/>
            <person name="Felipe A."/>
        </authorList>
    </citation>
    <scope>SUBCELLULAR LOCATION</scope>
    <scope>INTERACTION WITH KCNQ1</scope>
</reference>
<reference key="8">
    <citation type="journal article" date="2002" name="J. Med. Genet.">
        <title>Alport syndrome and mental retardation: clinical and genetic dissection of the contiguous gene deletion syndrome in Xq22.3 (ATS-MR).</title>
        <authorList>
            <person name="Meloni I."/>
            <person name="Vitelli F."/>
            <person name="Pucci L."/>
            <person name="Lowry R.B."/>
            <person name="Tonlorenzi R."/>
            <person name="Rossi E."/>
            <person name="Ventura M."/>
            <person name="Rizzoni G."/>
            <person name="Kashtan C.E."/>
            <person name="Pober B."/>
            <person name="Renieri A."/>
        </authorList>
    </citation>
    <scope>POSSIBLE INVOLVEMENT IN ATS-MR</scope>
</reference>
<reference key="9">
    <citation type="journal article" date="2005" name="Am. J. Cardiol.">
        <title>Relation of 97T polymorphism in KCNE5 to risk of atrial fibrillation.</title>
        <authorList>
            <person name="Ravn L.S."/>
            <person name="Hofman-Bang J."/>
            <person name="Dixen U."/>
            <person name="Larsen S.O."/>
            <person name="Jensen G."/>
            <person name="Haunso S."/>
            <person name="Svendsen J.H."/>
            <person name="Christiansen M."/>
        </authorList>
    </citation>
    <scope>VARIANT SER-33</scope>
</reference>
<reference key="10">
    <citation type="journal article" date="2008" name="Heart Rhythm">
        <title>Gain of function in IKs secondary to a mutation in KCNE5 associated with atrial fibrillation.</title>
        <authorList>
            <person name="Ravn L.S."/>
            <person name="Aizawa Y."/>
            <person name="Pollevick G.D."/>
            <person name="Hofman-Bang J."/>
            <person name="Cordeiro J.M."/>
            <person name="Dixen U."/>
            <person name="Jensen G."/>
            <person name="Wu Y."/>
            <person name="Burashnikov E."/>
            <person name="Haunso S."/>
            <person name="Guerchicoff A."/>
            <person name="Hu D."/>
            <person name="Svendsen J.H."/>
            <person name="Christiansen M."/>
            <person name="Antzelevitch C."/>
        </authorList>
    </citation>
    <scope>VARIANT PHE-65</scope>
    <scope>CHARACTERIZATION OF VARIANT PHE-65</scope>
</reference>
<reference key="11">
    <citation type="journal article" date="2011" name="Circ. Arrhythm. Electrophysiol.">
        <title>KCNE5 (KCNE1L) variants are novel modulators of Brugada syndrome and idiopathic ventricular fibrillation.</title>
        <authorList>
            <person name="Ohno S."/>
            <person name="Zankov D.P."/>
            <person name="Ding W.G."/>
            <person name="Itoh H."/>
            <person name="Makiyama T."/>
            <person name="Doi T."/>
            <person name="Shizuta S."/>
            <person name="Hattori T."/>
            <person name="Miyamoto A."/>
            <person name="Naiki N."/>
            <person name="Hancox J.C."/>
            <person name="Matsuura H."/>
            <person name="Horie M."/>
        </authorList>
    </citation>
    <scope>VARIANT HIS-81</scope>
    <scope>CHARACTERIZATION OF VARIANT HIS-81</scope>
</reference>
<feature type="chain" id="PRO_0000144294" description="Potassium voltage-gated channel subfamily E regulatory beta subunit 5">
    <location>
        <begin position="1"/>
        <end position="142"/>
    </location>
</feature>
<feature type="transmembrane region" description="Helical" evidence="1">
    <location>
        <begin position="61"/>
        <end position="81"/>
    </location>
</feature>
<feature type="topological domain" description="Cytoplasmic" evidence="1">
    <location>
        <begin position="82"/>
        <end position="142"/>
    </location>
</feature>
<feature type="region of interest" description="Disordered" evidence="2">
    <location>
        <begin position="119"/>
        <end position="142"/>
    </location>
</feature>
<feature type="glycosylation site" description="N-linked (GlcNAc...) asparagine" evidence="1">
    <location>
        <position position="2"/>
    </location>
</feature>
<feature type="glycosylation site" description="N-linked (GlcNAc...) asparagine" evidence="1">
    <location>
        <position position="25"/>
    </location>
</feature>
<feature type="sequence variant" id="VAR_053037" description="In dbSNP:rs17003955." evidence="6">
    <original>P</original>
    <variation>S</variation>
    <location>
        <position position="33"/>
    </location>
</feature>
<feature type="sequence variant" id="VAR_072679" description="Found in patients with atrial fibrillation; uncertain significance; loss of its inhibitory effects on KCNQ1; dbSNP:rs1364685385." evidence="7">
    <original>L</original>
    <variation>F</variation>
    <location>
        <position position="65"/>
    </location>
</feature>
<feature type="sequence variant" id="VAR_072680" description="Found in patients with ventricular fibrillation; uncertain significance; loss of its inhibitory effects on KCNQ1; dbSNP:rs199924386." evidence="9">
    <original>Y</original>
    <variation>H</variation>
    <location>
        <position position="81"/>
    </location>
</feature>
<feature type="sequence variant" id="VAR_034048" description="In dbSNP:rs41312935.">
    <original>E</original>
    <variation>Q</variation>
    <location>
        <position position="114"/>
    </location>
</feature>
<evidence type="ECO:0000255" key="1"/>
<evidence type="ECO:0000256" key="2">
    <source>
        <dbReference type="SAM" id="MobiDB-lite"/>
    </source>
</evidence>
<evidence type="ECO:0000269" key="3">
    <source>
    </source>
</evidence>
<evidence type="ECO:0000269" key="4">
    <source>
    </source>
</evidence>
<evidence type="ECO:0000269" key="5">
    <source>
    </source>
</evidence>
<evidence type="ECO:0000269" key="6">
    <source>
    </source>
</evidence>
<evidence type="ECO:0000269" key="7">
    <source>
    </source>
</evidence>
<evidence type="ECO:0000269" key="8">
    <source>
    </source>
</evidence>
<evidence type="ECO:0000269" key="9">
    <source>
    </source>
</evidence>
<evidence type="ECO:0000303" key="10">
    <source>
    </source>
</evidence>
<evidence type="ECO:0000305" key="11"/>
<proteinExistence type="evidence at protein level"/>
<accession>Q9UJ90</accession>
<accession>Q5JWV7</accession>
<organism>
    <name type="scientific">Homo sapiens</name>
    <name type="common">Human</name>
    <dbReference type="NCBI Taxonomy" id="9606"/>
    <lineage>
        <taxon>Eukaryota</taxon>
        <taxon>Metazoa</taxon>
        <taxon>Chordata</taxon>
        <taxon>Craniata</taxon>
        <taxon>Vertebrata</taxon>
        <taxon>Euteleostomi</taxon>
        <taxon>Mammalia</taxon>
        <taxon>Eutheria</taxon>
        <taxon>Euarchontoglires</taxon>
        <taxon>Primates</taxon>
        <taxon>Haplorrhini</taxon>
        <taxon>Catarrhini</taxon>
        <taxon>Hominidae</taxon>
        <taxon>Homo</taxon>
    </lineage>
</organism>
<dbReference type="EMBL" id="AJ012743">
    <property type="protein sequence ID" value="CAB58359.1"/>
    <property type="molecule type" value="mRNA"/>
</dbReference>
<dbReference type="EMBL" id="AK314923">
    <property type="protein sequence ID" value="BAG37431.1"/>
    <property type="molecule type" value="mRNA"/>
</dbReference>
<dbReference type="EMBL" id="DQ784807">
    <property type="protein sequence ID" value="ABQ01242.1"/>
    <property type="molecule type" value="Genomic_DNA"/>
</dbReference>
<dbReference type="EMBL" id="EF535525">
    <property type="protein sequence ID" value="ABQ08564.1"/>
    <property type="molecule type" value="mRNA"/>
</dbReference>
<dbReference type="EMBL" id="CH471120">
    <property type="protein sequence ID" value="EAX02676.1"/>
    <property type="molecule type" value="Genomic_DNA"/>
</dbReference>
<dbReference type="EMBL" id="BC035330">
    <property type="protein sequence ID" value="AAH35330.1"/>
    <property type="molecule type" value="mRNA"/>
</dbReference>
<dbReference type="CCDS" id="CCDS14547.1"/>
<dbReference type="RefSeq" id="NP_036414.1">
    <property type="nucleotide sequence ID" value="NM_012282.4"/>
</dbReference>
<dbReference type="SMR" id="Q9UJ90"/>
<dbReference type="BioGRID" id="117161">
    <property type="interactions" value="7"/>
</dbReference>
<dbReference type="CORUM" id="Q9UJ90"/>
<dbReference type="FunCoup" id="Q9UJ90">
    <property type="interactions" value="12"/>
</dbReference>
<dbReference type="IntAct" id="Q9UJ90">
    <property type="interactions" value="4"/>
</dbReference>
<dbReference type="STRING" id="9606.ENSP00000361173"/>
<dbReference type="DrugBank" id="DB00228">
    <property type="generic name" value="Enflurane"/>
</dbReference>
<dbReference type="DrugBank" id="DB01110">
    <property type="generic name" value="Miconazole"/>
</dbReference>
<dbReference type="DrugBank" id="DB01069">
    <property type="generic name" value="Promethazine"/>
</dbReference>
<dbReference type="TCDB" id="8.A.10.3.2">
    <property type="family name" value="the slow voltage-gated k+ channel accessory protein (mink) family"/>
</dbReference>
<dbReference type="GlyCosmos" id="Q9UJ90">
    <property type="glycosylation" value="2 sites, No reported glycans"/>
</dbReference>
<dbReference type="GlyGen" id="Q9UJ90">
    <property type="glycosylation" value="2 sites"/>
</dbReference>
<dbReference type="PhosphoSitePlus" id="Q9UJ90"/>
<dbReference type="BioMuta" id="KCNE5"/>
<dbReference type="PaxDb" id="9606-ENSP00000361173"/>
<dbReference type="PeptideAtlas" id="Q9UJ90"/>
<dbReference type="ProteomicsDB" id="84602"/>
<dbReference type="ABCD" id="Q9UJ90">
    <property type="antibodies" value="1 sequenced antibody"/>
</dbReference>
<dbReference type="Antibodypedia" id="51261">
    <property type="antibodies" value="116 antibodies from 24 providers"/>
</dbReference>
<dbReference type="DNASU" id="23630"/>
<dbReference type="Ensembl" id="ENST00000372101.3">
    <property type="protein sequence ID" value="ENSP00000361173.2"/>
    <property type="gene ID" value="ENSG00000176076.7"/>
</dbReference>
<dbReference type="GeneID" id="23630"/>
<dbReference type="KEGG" id="hsa:23630"/>
<dbReference type="MANE-Select" id="ENST00000372101.3">
    <property type="protein sequence ID" value="ENSP00000361173.2"/>
    <property type="RefSeq nucleotide sequence ID" value="NM_012282.4"/>
    <property type="RefSeq protein sequence ID" value="NP_036414.1"/>
</dbReference>
<dbReference type="UCSC" id="uc004eoh.4">
    <property type="organism name" value="human"/>
</dbReference>
<dbReference type="AGR" id="HGNC:6241"/>
<dbReference type="CTD" id="23630"/>
<dbReference type="DisGeNET" id="23630"/>
<dbReference type="GeneCards" id="KCNE5"/>
<dbReference type="GeneReviews" id="KCNE5"/>
<dbReference type="HGNC" id="HGNC:6241">
    <property type="gene designation" value="KCNE5"/>
</dbReference>
<dbReference type="HPA" id="ENSG00000176076">
    <property type="expression patterns" value="Tissue enhanced (brain, tongue)"/>
</dbReference>
<dbReference type="MalaCards" id="KCNE5"/>
<dbReference type="MIM" id="300194">
    <property type="type" value="phenotype"/>
</dbReference>
<dbReference type="MIM" id="300328">
    <property type="type" value="gene"/>
</dbReference>
<dbReference type="neXtProt" id="NX_Q9UJ90"/>
<dbReference type="OpenTargets" id="ENSG00000176076"/>
<dbReference type="Orphanet" id="86818">
    <property type="disease" value="Alport syndrome-intellectual disability-midface hypoplasia-elliptocytosis syndrome"/>
</dbReference>
<dbReference type="Orphanet" id="130">
    <property type="disease" value="Brugada syndrome"/>
</dbReference>
<dbReference type="PharmGKB" id="PA30031"/>
<dbReference type="VEuPathDB" id="HostDB:ENSG00000176076"/>
<dbReference type="eggNOG" id="ENOG502SAHN">
    <property type="taxonomic scope" value="Eukaryota"/>
</dbReference>
<dbReference type="GeneTree" id="ENSGT00940000155001"/>
<dbReference type="HOGENOM" id="CLU_1786304_0_0_1"/>
<dbReference type="InParanoid" id="Q9UJ90"/>
<dbReference type="OMA" id="EPSQACA"/>
<dbReference type="OrthoDB" id="9907547at2759"/>
<dbReference type="PAN-GO" id="Q9UJ90">
    <property type="GO annotations" value="10 GO annotations based on evolutionary models"/>
</dbReference>
<dbReference type="PhylomeDB" id="Q9UJ90"/>
<dbReference type="TreeFam" id="TF335981"/>
<dbReference type="PathwayCommons" id="Q9UJ90"/>
<dbReference type="Reactome" id="R-HSA-5576890">
    <property type="pathway name" value="Phase 3 - rapid repolarisation"/>
</dbReference>
<dbReference type="Reactome" id="R-HSA-5576893">
    <property type="pathway name" value="Phase 2 - plateau phase"/>
</dbReference>
<dbReference type="SignaLink" id="Q9UJ90"/>
<dbReference type="BioGRID-ORCS" id="23630">
    <property type="hits" value="12 hits in 767 CRISPR screens"/>
</dbReference>
<dbReference type="GeneWiki" id="KCNE1L"/>
<dbReference type="GenomeRNAi" id="23630"/>
<dbReference type="Pharos" id="Q9UJ90">
    <property type="development level" value="Tbio"/>
</dbReference>
<dbReference type="PRO" id="PR:Q9UJ90"/>
<dbReference type="Proteomes" id="UP000005640">
    <property type="component" value="Chromosome X"/>
</dbReference>
<dbReference type="RNAct" id="Q9UJ90">
    <property type="molecule type" value="protein"/>
</dbReference>
<dbReference type="Bgee" id="ENSG00000176076">
    <property type="expression patterns" value="Expressed in primordial germ cell in gonad and 85 other cell types or tissues"/>
</dbReference>
<dbReference type="GO" id="GO:0005886">
    <property type="term" value="C:plasma membrane"/>
    <property type="evidence" value="ECO:0000314"/>
    <property type="project" value="UniProtKB"/>
</dbReference>
<dbReference type="GO" id="GO:0008076">
    <property type="term" value="C:voltage-gated potassium channel complex"/>
    <property type="evidence" value="ECO:0000314"/>
    <property type="project" value="BHF-UCL"/>
</dbReference>
<dbReference type="GO" id="GO:0015459">
    <property type="term" value="F:potassium channel regulator activity"/>
    <property type="evidence" value="ECO:0000314"/>
    <property type="project" value="BHF-UCL"/>
</dbReference>
<dbReference type="GO" id="GO:0044325">
    <property type="term" value="F:transmembrane transporter binding"/>
    <property type="evidence" value="ECO:0000353"/>
    <property type="project" value="BHF-UCL"/>
</dbReference>
<dbReference type="GO" id="GO:0005249">
    <property type="term" value="F:voltage-gated potassium channel activity"/>
    <property type="evidence" value="ECO:0007669"/>
    <property type="project" value="InterPro"/>
</dbReference>
<dbReference type="GO" id="GO:0086014">
    <property type="term" value="P:atrial cardiac muscle cell action potential"/>
    <property type="evidence" value="ECO:0000315"/>
    <property type="project" value="BHF-UCL"/>
</dbReference>
<dbReference type="GO" id="GO:0060048">
    <property type="term" value="P:cardiac muscle contraction"/>
    <property type="evidence" value="ECO:0000315"/>
    <property type="project" value="BHF-UCL"/>
</dbReference>
<dbReference type="GO" id="GO:0086011">
    <property type="term" value="P:membrane repolarization during action potential"/>
    <property type="evidence" value="ECO:0000318"/>
    <property type="project" value="GO_Central"/>
</dbReference>
<dbReference type="GO" id="GO:0098915">
    <property type="term" value="P:membrane repolarization during ventricular cardiac muscle cell action potential"/>
    <property type="evidence" value="ECO:0007669"/>
    <property type="project" value="GOC"/>
</dbReference>
<dbReference type="GO" id="GO:1903765">
    <property type="term" value="P:negative regulation of potassium ion export across plasma membrane"/>
    <property type="evidence" value="ECO:0000314"/>
    <property type="project" value="BHF-UCL"/>
</dbReference>
<dbReference type="GO" id="GO:1901380">
    <property type="term" value="P:negative regulation of potassium ion transmembrane transport"/>
    <property type="evidence" value="ECO:0000314"/>
    <property type="project" value="BHF-UCL"/>
</dbReference>
<dbReference type="GO" id="GO:1901381">
    <property type="term" value="P:positive regulation of potassium ion transmembrane transport"/>
    <property type="evidence" value="ECO:0000314"/>
    <property type="project" value="BHF-UCL"/>
</dbReference>
<dbReference type="GO" id="GO:0097623">
    <property type="term" value="P:potassium ion export across plasma membrane"/>
    <property type="evidence" value="ECO:0000318"/>
    <property type="project" value="GO_Central"/>
</dbReference>
<dbReference type="GO" id="GO:0060372">
    <property type="term" value="P:regulation of atrial cardiac muscle cell membrane repolarization"/>
    <property type="evidence" value="ECO:0000315"/>
    <property type="project" value="BHF-UCL"/>
</dbReference>
<dbReference type="GO" id="GO:0008016">
    <property type="term" value="P:regulation of heart contraction"/>
    <property type="evidence" value="ECO:0000315"/>
    <property type="project" value="BHF-UCL"/>
</dbReference>
<dbReference type="GO" id="GO:0086091">
    <property type="term" value="P:regulation of heart rate by cardiac conduction"/>
    <property type="evidence" value="ECO:0000315"/>
    <property type="project" value="BHF-UCL"/>
</dbReference>
<dbReference type="GO" id="GO:0060306">
    <property type="term" value="P:regulation of membrane repolarization"/>
    <property type="evidence" value="ECO:0000314"/>
    <property type="project" value="BHF-UCL"/>
</dbReference>
<dbReference type="GO" id="GO:1901379">
    <property type="term" value="P:regulation of potassium ion transmembrane transport"/>
    <property type="evidence" value="ECO:0000314"/>
    <property type="project" value="BHF-UCL"/>
</dbReference>
<dbReference type="GO" id="GO:0060307">
    <property type="term" value="P:regulation of ventricular cardiac muscle cell membrane repolarization"/>
    <property type="evidence" value="ECO:0000315"/>
    <property type="project" value="BHF-UCL"/>
</dbReference>
<dbReference type="GO" id="GO:0086005">
    <property type="term" value="P:ventricular cardiac muscle cell action potential"/>
    <property type="evidence" value="ECO:0000315"/>
    <property type="project" value="BHF-UCL"/>
</dbReference>
<dbReference type="InterPro" id="IPR000369">
    <property type="entry name" value="K_chnl_KCNE"/>
</dbReference>
<dbReference type="PANTHER" id="PTHR15282">
    <property type="entry name" value="POTASSIUM VOLTAGE-GATED CHANNEL SUBFAMILY E MEMBER 1, 3"/>
    <property type="match status" value="1"/>
</dbReference>
<dbReference type="PANTHER" id="PTHR15282:SF7">
    <property type="entry name" value="POTASSIUM VOLTAGE-GATED CHANNEL SUBFAMILY E REGULATORY BETA SUBUNIT 5"/>
    <property type="match status" value="1"/>
</dbReference>